<sequence>MKKQDISVKTVVAIGIGAAVFVILGRFVVIPTGFPNTNIETSYAFLALISAIFGPFAGLMTGLVGHAIKDFTTYGSAWWSWVICSGIIGCLYGWIGLKLNLSSGRFSRKSMIYFNIGQIIANIICWALIAPTLDILIYNEPANKVYTQGVISAVLNIISVGIIGTILLKAYASSQIKKGSLRKE</sequence>
<feature type="chain" id="PRO_0000260808" description="UPF0397 protein SAS2570">
    <location>
        <begin position="1"/>
        <end position="184"/>
    </location>
</feature>
<feature type="transmembrane region" description="Helical" evidence="1">
    <location>
        <begin position="11"/>
        <end position="31"/>
    </location>
</feature>
<feature type="transmembrane region" description="Helical" evidence="1">
    <location>
        <begin position="44"/>
        <end position="64"/>
    </location>
</feature>
<feature type="transmembrane region" description="Helical" evidence="1">
    <location>
        <begin position="77"/>
        <end position="97"/>
    </location>
</feature>
<feature type="transmembrane region" description="Helical" evidence="1">
    <location>
        <begin position="111"/>
        <end position="131"/>
    </location>
</feature>
<feature type="transmembrane region" description="Helical" evidence="1">
    <location>
        <begin position="148"/>
        <end position="168"/>
    </location>
</feature>
<name>Y2570_STAAS</name>
<proteinExistence type="inferred from homology"/>
<reference key="1">
    <citation type="journal article" date="2004" name="Proc. Natl. Acad. Sci. U.S.A.">
        <title>Complete genomes of two clinical Staphylococcus aureus strains: evidence for the rapid evolution of virulence and drug resistance.</title>
        <authorList>
            <person name="Holden M.T.G."/>
            <person name="Feil E.J."/>
            <person name="Lindsay J.A."/>
            <person name="Peacock S.J."/>
            <person name="Day N.P.J."/>
            <person name="Enright M.C."/>
            <person name="Foster T.J."/>
            <person name="Moore C.E."/>
            <person name="Hurst L."/>
            <person name="Atkin R."/>
            <person name="Barron A."/>
            <person name="Bason N."/>
            <person name="Bentley S.D."/>
            <person name="Chillingworth C."/>
            <person name="Chillingworth T."/>
            <person name="Churcher C."/>
            <person name="Clark L."/>
            <person name="Corton C."/>
            <person name="Cronin A."/>
            <person name="Doggett J."/>
            <person name="Dowd L."/>
            <person name="Feltwell T."/>
            <person name="Hance Z."/>
            <person name="Harris B."/>
            <person name="Hauser H."/>
            <person name="Holroyd S."/>
            <person name="Jagels K."/>
            <person name="James K.D."/>
            <person name="Lennard N."/>
            <person name="Line A."/>
            <person name="Mayes R."/>
            <person name="Moule S."/>
            <person name="Mungall K."/>
            <person name="Ormond D."/>
            <person name="Quail M.A."/>
            <person name="Rabbinowitsch E."/>
            <person name="Rutherford K.M."/>
            <person name="Sanders M."/>
            <person name="Sharp S."/>
            <person name="Simmonds M."/>
            <person name="Stevens K."/>
            <person name="Whitehead S."/>
            <person name="Barrell B.G."/>
            <person name="Spratt B.G."/>
            <person name="Parkhill J."/>
        </authorList>
    </citation>
    <scope>NUCLEOTIDE SEQUENCE [LARGE SCALE GENOMIC DNA]</scope>
    <source>
        <strain>MSSA476</strain>
    </source>
</reference>
<organism>
    <name type="scientific">Staphylococcus aureus (strain MSSA476)</name>
    <dbReference type="NCBI Taxonomy" id="282459"/>
    <lineage>
        <taxon>Bacteria</taxon>
        <taxon>Bacillati</taxon>
        <taxon>Bacillota</taxon>
        <taxon>Bacilli</taxon>
        <taxon>Bacillales</taxon>
        <taxon>Staphylococcaceae</taxon>
        <taxon>Staphylococcus</taxon>
    </lineage>
</organism>
<evidence type="ECO:0000255" key="1">
    <source>
        <dbReference type="HAMAP-Rule" id="MF_01572"/>
    </source>
</evidence>
<keyword id="KW-1003">Cell membrane</keyword>
<keyword id="KW-0472">Membrane</keyword>
<keyword id="KW-0812">Transmembrane</keyword>
<keyword id="KW-1133">Transmembrane helix</keyword>
<dbReference type="EMBL" id="BX571857">
    <property type="protein sequence ID" value="CAG44387.1"/>
    <property type="molecule type" value="Genomic_DNA"/>
</dbReference>
<dbReference type="RefSeq" id="WP_000743714.1">
    <property type="nucleotide sequence ID" value="NC_002953.3"/>
</dbReference>
<dbReference type="KEGG" id="sas:SAS2570"/>
<dbReference type="HOGENOM" id="CLU_120023_0_0_9"/>
<dbReference type="GO" id="GO:0005886">
    <property type="term" value="C:plasma membrane"/>
    <property type="evidence" value="ECO:0007669"/>
    <property type="project" value="UniProtKB-SubCell"/>
</dbReference>
<dbReference type="Gene3D" id="1.10.1760.20">
    <property type="match status" value="1"/>
</dbReference>
<dbReference type="HAMAP" id="MF_01572">
    <property type="entry name" value="UPF0397"/>
    <property type="match status" value="1"/>
</dbReference>
<dbReference type="InterPro" id="IPR009825">
    <property type="entry name" value="ECF_substrate-spec-like"/>
</dbReference>
<dbReference type="InterPro" id="IPR022914">
    <property type="entry name" value="UPF0397"/>
</dbReference>
<dbReference type="NCBIfam" id="NF010182">
    <property type="entry name" value="PRK13661.1"/>
    <property type="match status" value="1"/>
</dbReference>
<dbReference type="PANTHER" id="PTHR37815">
    <property type="entry name" value="UPF0397 PROTEIN BC_2624-RELATED"/>
    <property type="match status" value="1"/>
</dbReference>
<dbReference type="PANTHER" id="PTHR37815:SF3">
    <property type="entry name" value="UPF0397 PROTEIN SPR0429"/>
    <property type="match status" value="1"/>
</dbReference>
<dbReference type="Pfam" id="PF07155">
    <property type="entry name" value="ECF-ribofla_trS"/>
    <property type="match status" value="1"/>
</dbReference>
<gene>
    <name type="ordered locus">SAS2570</name>
</gene>
<protein>
    <recommendedName>
        <fullName evidence="1">UPF0397 protein SAS2570</fullName>
    </recommendedName>
</protein>
<comment type="subcellular location">
    <subcellularLocation>
        <location evidence="1">Cell membrane</location>
        <topology evidence="1">Multi-pass membrane protein</topology>
    </subcellularLocation>
</comment>
<comment type="similarity">
    <text evidence="1">Belongs to the UPF0397 family.</text>
</comment>
<accession>Q6G5Z0</accession>